<accession>Q050H2</accession>
<proteinExistence type="inferred from homology"/>
<evidence type="ECO:0000255" key="1">
    <source>
        <dbReference type="HAMAP-Rule" id="MF_01503"/>
    </source>
</evidence>
<dbReference type="EMBL" id="CP000348">
    <property type="protein sequence ID" value="ABJ79273.1"/>
    <property type="molecule type" value="Genomic_DNA"/>
</dbReference>
<dbReference type="RefSeq" id="WP_002727460.1">
    <property type="nucleotide sequence ID" value="NC_008508.1"/>
</dbReference>
<dbReference type="SMR" id="Q050H2"/>
<dbReference type="KEGG" id="lbl:LBL_1834"/>
<dbReference type="HOGENOM" id="CLU_165326_0_0_12"/>
<dbReference type="HAMAP" id="MF_01503">
    <property type="entry name" value="RemA"/>
    <property type="match status" value="1"/>
</dbReference>
<dbReference type="InterPro" id="IPR007169">
    <property type="entry name" value="RemA-like"/>
</dbReference>
<dbReference type="NCBIfam" id="NF003315">
    <property type="entry name" value="PRK04323.1"/>
    <property type="match status" value="1"/>
</dbReference>
<dbReference type="PANTHER" id="PTHR38449:SF1">
    <property type="entry name" value="REGULATORY PROTEIN SSL2874-RELATED"/>
    <property type="match status" value="1"/>
</dbReference>
<dbReference type="PANTHER" id="PTHR38449">
    <property type="entry name" value="REGULATORY PROTEIN TM_1690-RELATED"/>
    <property type="match status" value="1"/>
</dbReference>
<dbReference type="Pfam" id="PF04025">
    <property type="entry name" value="RemA-like"/>
    <property type="match status" value="1"/>
</dbReference>
<name>Y1834_LEPBL</name>
<gene>
    <name type="ordered locus">LBL_1834</name>
</gene>
<comment type="similarity">
    <text evidence="1">Belongs to the RemA family.</text>
</comment>
<organism>
    <name type="scientific">Leptospira borgpetersenii serovar Hardjo-bovis (strain L550)</name>
    <dbReference type="NCBI Taxonomy" id="355276"/>
    <lineage>
        <taxon>Bacteria</taxon>
        <taxon>Pseudomonadati</taxon>
        <taxon>Spirochaetota</taxon>
        <taxon>Spirochaetia</taxon>
        <taxon>Leptospirales</taxon>
        <taxon>Leptospiraceae</taxon>
        <taxon>Leptospira</taxon>
    </lineage>
</organism>
<reference key="1">
    <citation type="journal article" date="2006" name="Proc. Natl. Acad. Sci. U.S.A.">
        <title>Genome reduction in Leptospira borgpetersenii reflects limited transmission potential.</title>
        <authorList>
            <person name="Bulach D.M."/>
            <person name="Zuerner R.L."/>
            <person name="Wilson P."/>
            <person name="Seemann T."/>
            <person name="McGrath A."/>
            <person name="Cullen P.A."/>
            <person name="Davis J."/>
            <person name="Johnson M."/>
            <person name="Kuczek E."/>
            <person name="Alt D.P."/>
            <person name="Peterson-Burch B."/>
            <person name="Coppel R.L."/>
            <person name="Rood J.I."/>
            <person name="Davies J.K."/>
            <person name="Adler B."/>
        </authorList>
    </citation>
    <scope>NUCLEOTIDE SEQUENCE [LARGE SCALE GENOMIC DNA]</scope>
    <source>
        <strain>L550</strain>
    </source>
</reference>
<feature type="chain" id="PRO_0000294257" description="Putative regulatory protein LBL_1834">
    <location>
        <begin position="1"/>
        <end position="93"/>
    </location>
</feature>
<sequence>MSQFSVLNVGFGNIVLVSKIVSIIHSDSASAKRIRNEAKSNNSLIDATQGKKTRSIIVTDSNHLILSNLRVESLAKRIESSDNSIASEEEDLD</sequence>
<protein>
    <recommendedName>
        <fullName evidence="1">Putative regulatory protein LBL_1834</fullName>
    </recommendedName>
</protein>